<comment type="function">
    <text>Involved in transvection phenomena (= synapsis-dependent gene expression), where the synaptic pairing of chromosomes carrying genes with which zeste interacts influences the expression of these genes. Zeste binds to DNA and stimulates transcription from a nearby promoter.</text>
</comment>
<comment type="subunit">
    <text>Self-associates forming complexes of several hundred monomers.</text>
</comment>
<comment type="interaction">
    <interactant intactId="EBI-167915">
        <id>P09956</id>
    </interactant>
    <interactant intactId="EBI-74966">
        <id>Q7KNM2</id>
        <label>lwr</label>
    </interactant>
    <organismsDiffer>false</organismsDiffer>
    <experiments>5</experiments>
</comment>
<comment type="subcellular location">
    <subcellularLocation>
        <location>Nucleus</location>
    </subcellularLocation>
</comment>
<accession>P09956</accession>
<accession>Q24596</accession>
<accession>Q9V3F1</accession>
<keyword id="KW-0002">3D-structure</keyword>
<keyword id="KW-0238">DNA-binding</keyword>
<keyword id="KW-0539">Nucleus</keyword>
<keyword id="KW-1185">Reference proteome</keyword>
<keyword id="KW-0804">Transcription</keyword>
<keyword id="KW-0805">Transcription regulation</keyword>
<proteinExistence type="evidence at protein level"/>
<sequence length="575" mass="61977">MSAQGEGGGAGGSGGGGAGSDGGGNAGQSSTGSGTVAVTNGGNSSAKNQLPLTPRFTAEEKEVLYTLFHLHEEVIDIKHRKKQRNKYSVRETWDKIVKDFNSHPHVSAMRNIKQIQKFWLNSRLRKQYPYRDGSSSNLSSGSAKISSVSVSVASAVPQQQQQQHHQQHDSVKVEPEYQISPDASEHNPQADTFDEIEMDANDVSEIDEDPMEQQQQQQQEAQAQAQAQAQAQAQVQSAAAEMQKMQQVNAVAAAAAANATMINTHQINVDQISAEKLTLNDLLHFKTARPREEIILIKHPEATATQIHTIPTQAQQHPMATITAGGYNQQIISEIKPQQITLAQYQAQQQQQAQAQAQAQAQAQAQAQAQAQAQAQAQQLAQQQLAAAQHQQLAAAVQVHHQQQQQQQAAVAVQQQQAAAAAAVKMQLTAATPTFTFSALPTVTAATTVPAAVPVPVATASSGSANSVAVNTSTASSVSINNTSLGGGGGNGATNSSATAADSFEERMNYFKIREAELRCKEQQLATEAKRIELNKAQDELKYMKEVHRLRVEELTMKIRILQKEEEQLRKCSTS</sequence>
<dbReference type="EMBL" id="Y00049">
    <property type="protein sequence ID" value="CAA68262.1"/>
    <property type="status" value="ALT_SEQ"/>
    <property type="molecule type" value="Genomic_DNA"/>
</dbReference>
<dbReference type="EMBL" id="X06743">
    <property type="protein sequence ID" value="CAA29918.1"/>
    <property type="status" value="ALT_SEQ"/>
    <property type="molecule type" value="Genomic_DNA"/>
</dbReference>
<dbReference type="EMBL" id="L13043">
    <property type="protein sequence ID" value="AAA29026.1"/>
    <property type="molecule type" value="Genomic_DNA"/>
</dbReference>
<dbReference type="EMBL" id="L13044">
    <property type="protein sequence ID" value="AAA29027.1"/>
    <property type="molecule type" value="Genomic_DNA"/>
</dbReference>
<dbReference type="EMBL" id="L13045">
    <property type="protein sequence ID" value="AAA29028.1"/>
    <property type="molecule type" value="Genomic_DNA"/>
</dbReference>
<dbReference type="EMBL" id="L13046">
    <property type="protein sequence ID" value="AAA29029.1"/>
    <property type="molecule type" value="Genomic_DNA"/>
</dbReference>
<dbReference type="EMBL" id="L13047">
    <property type="protein sequence ID" value="AAA29030.1"/>
    <property type="molecule type" value="Genomic_DNA"/>
</dbReference>
<dbReference type="EMBL" id="L13048">
    <property type="protein sequence ID" value="AAA29031.1"/>
    <property type="molecule type" value="Genomic_DNA"/>
</dbReference>
<dbReference type="EMBL" id="AE014298">
    <property type="protein sequence ID" value="AAF45783.1"/>
    <property type="molecule type" value="Genomic_DNA"/>
</dbReference>
<dbReference type="EMBL" id="AL133505">
    <property type="protein sequence ID" value="CAB63525.1"/>
    <property type="molecule type" value="Genomic_DNA"/>
</dbReference>
<dbReference type="PIR" id="A26639">
    <property type="entry name" value="A26639"/>
</dbReference>
<dbReference type="PIR" id="S01272">
    <property type="entry name" value="S01272"/>
</dbReference>
<dbReference type="RefSeq" id="NP_001033827.1">
    <property type="nucleotide sequence ID" value="NM_001038738.2"/>
</dbReference>
<dbReference type="RefSeq" id="NP_525051.1">
    <property type="nucleotide sequence ID" value="NM_080312.2"/>
</dbReference>
<dbReference type="PDB" id="5CQQ">
    <property type="method" value="X-ray"/>
    <property type="resolution" value="3.10 A"/>
    <property type="chains" value="A/B=51-130"/>
</dbReference>
<dbReference type="PDBsum" id="5CQQ"/>
<dbReference type="SMR" id="P09956"/>
<dbReference type="BioGRID" id="57766">
    <property type="interactions" value="54"/>
</dbReference>
<dbReference type="FunCoup" id="P09956">
    <property type="interactions" value="364"/>
</dbReference>
<dbReference type="IntAct" id="P09956">
    <property type="interactions" value="19"/>
</dbReference>
<dbReference type="STRING" id="7227.FBpp0303588"/>
<dbReference type="PaxDb" id="7227-FBpp0070419"/>
<dbReference type="DNASU" id="31230"/>
<dbReference type="EnsemblMetazoa" id="FBtr0100380">
    <property type="protein sequence ID" value="FBpp0099792"/>
    <property type="gene ID" value="FBgn0004050"/>
</dbReference>
<dbReference type="GeneID" id="31230"/>
<dbReference type="KEGG" id="dme:Dmel_CG7803"/>
<dbReference type="UCSC" id="CG7803-RA">
    <property type="organism name" value="d. melanogaster"/>
</dbReference>
<dbReference type="AGR" id="FB:FBgn0004050"/>
<dbReference type="CTD" id="22633"/>
<dbReference type="FlyBase" id="FBgn0004050">
    <property type="gene designation" value="z"/>
</dbReference>
<dbReference type="VEuPathDB" id="VectorBase:FBgn0004050"/>
<dbReference type="eggNOG" id="ENOG502QR8W">
    <property type="taxonomic scope" value="Eukaryota"/>
</dbReference>
<dbReference type="HOGENOM" id="CLU_475907_0_0_1"/>
<dbReference type="InParanoid" id="P09956"/>
<dbReference type="OrthoDB" id="7791603at2759"/>
<dbReference type="SignaLink" id="P09956"/>
<dbReference type="BioGRID-ORCS" id="31230">
    <property type="hits" value="0 hits in 1 CRISPR screen"/>
</dbReference>
<dbReference type="GenomeRNAi" id="31230"/>
<dbReference type="PRO" id="PR:P09956"/>
<dbReference type="Proteomes" id="UP000000803">
    <property type="component" value="Chromosome X"/>
</dbReference>
<dbReference type="Bgee" id="FBgn0004050">
    <property type="expression patterns" value="Expressed in T neuron T5c (Drosophila) in embryonic/larval optic lobe (Drosophila) and 136 other cell types or tissues"/>
</dbReference>
<dbReference type="ExpressionAtlas" id="P09956">
    <property type="expression patterns" value="baseline and differential"/>
</dbReference>
<dbReference type="GO" id="GO:0005634">
    <property type="term" value="C:nucleus"/>
    <property type="evidence" value="ECO:0000314"/>
    <property type="project" value="FlyBase"/>
</dbReference>
<dbReference type="GO" id="GO:0005705">
    <property type="term" value="C:polytene chromosome interband"/>
    <property type="evidence" value="ECO:0000314"/>
    <property type="project" value="FlyBase"/>
</dbReference>
<dbReference type="GO" id="GO:0043565">
    <property type="term" value="F:sequence-specific DNA binding"/>
    <property type="evidence" value="ECO:0000314"/>
    <property type="project" value="FlyBase"/>
</dbReference>
<dbReference type="GO" id="GO:0031507">
    <property type="term" value="P:heterochromatin formation"/>
    <property type="evidence" value="ECO:0000314"/>
    <property type="project" value="FlyBase"/>
</dbReference>
<dbReference type="GO" id="GO:0045893">
    <property type="term" value="P:positive regulation of DNA-templated transcription"/>
    <property type="evidence" value="ECO:0000314"/>
    <property type="project" value="FlyBase"/>
</dbReference>
<dbReference type="GO" id="GO:0010628">
    <property type="term" value="P:positive regulation of gene expression"/>
    <property type="evidence" value="ECO:0000315"/>
    <property type="project" value="FlyBase"/>
</dbReference>
<dbReference type="InterPro" id="IPR028002">
    <property type="entry name" value="Myb_DNA-bind_5"/>
</dbReference>
<dbReference type="PANTHER" id="PTHR31535">
    <property type="match status" value="1"/>
</dbReference>
<dbReference type="PANTHER" id="PTHR31535:SF3">
    <property type="entry name" value="REGULATORY PROTEIN ZESTE"/>
    <property type="match status" value="1"/>
</dbReference>
<dbReference type="Pfam" id="PF13873">
    <property type="entry name" value="Myb_DNA-bind_5"/>
    <property type="match status" value="1"/>
</dbReference>
<evidence type="ECO:0000256" key="1">
    <source>
        <dbReference type="SAM" id="MobiDB-lite"/>
    </source>
</evidence>
<evidence type="ECO:0000305" key="2"/>
<evidence type="ECO:0007829" key="3">
    <source>
        <dbReference type="PDB" id="5CQQ"/>
    </source>
</evidence>
<organism>
    <name type="scientific">Drosophila melanogaster</name>
    <name type="common">Fruit fly</name>
    <dbReference type="NCBI Taxonomy" id="7227"/>
    <lineage>
        <taxon>Eukaryota</taxon>
        <taxon>Metazoa</taxon>
        <taxon>Ecdysozoa</taxon>
        <taxon>Arthropoda</taxon>
        <taxon>Hexapoda</taxon>
        <taxon>Insecta</taxon>
        <taxon>Pterygota</taxon>
        <taxon>Neoptera</taxon>
        <taxon>Endopterygota</taxon>
        <taxon>Diptera</taxon>
        <taxon>Brachycera</taxon>
        <taxon>Muscomorpha</taxon>
        <taxon>Ephydroidea</taxon>
        <taxon>Drosophilidae</taxon>
        <taxon>Drosophila</taxon>
        <taxon>Sophophora</taxon>
    </lineage>
</organism>
<reference key="1">
    <citation type="journal article" date="1988" name="Mol. Gen. Genet.">
        <title>Nucleotide sequence and structural analysis of the zeste locus of Drosophila melanogaster.</title>
        <authorList>
            <person name="Mansukhani A."/>
            <person name="Gunaratne P.H."/>
            <person name="Sherwood P.W."/>
            <person name="Sneath B.J."/>
            <person name="Goldberg M.L."/>
        </authorList>
    </citation>
    <scope>NUCLEOTIDE SEQUENCE [GENOMIC DNA]</scope>
</reference>
<reference key="2">
    <citation type="journal article" date="1987" name="EMBO J.">
        <title>Structure and sequence of the Drosophila zeste gene.</title>
        <authorList>
            <person name="Pirrotta V."/>
            <person name="Manet E."/>
            <person name="Hardon E."/>
            <person name="Bickel S.E."/>
            <person name="Benson M."/>
        </authorList>
    </citation>
    <scope>NUCLEOTIDE SEQUENCE [GENOMIC DNA]</scope>
    <source>
        <strain>Oregon-R</strain>
    </source>
</reference>
<reference key="3">
    <citation type="journal article" date="1990" name="EMBO J.">
        <title>Self-association of the Drosophila zeste protein is responsible for transvection effects.</title>
        <authorList>
            <person name="Bickel S.E."/>
            <person name="Pirrotta V."/>
        </authorList>
    </citation>
    <scope>SEQUENCE REVISION</scope>
    <scope>SELF-ASSOCIATION</scope>
</reference>
<reference key="4">
    <citation type="journal article" date="2000" name="Science">
        <title>The genome sequence of Drosophila melanogaster.</title>
        <authorList>
            <person name="Adams M.D."/>
            <person name="Celniker S.E."/>
            <person name="Holt R.A."/>
            <person name="Evans C.A."/>
            <person name="Gocayne J.D."/>
            <person name="Amanatides P.G."/>
            <person name="Scherer S.E."/>
            <person name="Li P.W."/>
            <person name="Hoskins R.A."/>
            <person name="Galle R.F."/>
            <person name="George R.A."/>
            <person name="Lewis S.E."/>
            <person name="Richards S."/>
            <person name="Ashburner M."/>
            <person name="Henderson S.N."/>
            <person name="Sutton G.G."/>
            <person name="Wortman J.R."/>
            <person name="Yandell M.D."/>
            <person name="Zhang Q."/>
            <person name="Chen L.X."/>
            <person name="Brandon R.C."/>
            <person name="Rogers Y.-H.C."/>
            <person name="Blazej R.G."/>
            <person name="Champe M."/>
            <person name="Pfeiffer B.D."/>
            <person name="Wan K.H."/>
            <person name="Doyle C."/>
            <person name="Baxter E.G."/>
            <person name="Helt G."/>
            <person name="Nelson C.R."/>
            <person name="Miklos G.L.G."/>
            <person name="Abril J.F."/>
            <person name="Agbayani A."/>
            <person name="An H.-J."/>
            <person name="Andrews-Pfannkoch C."/>
            <person name="Baldwin D."/>
            <person name="Ballew R.M."/>
            <person name="Basu A."/>
            <person name="Baxendale J."/>
            <person name="Bayraktaroglu L."/>
            <person name="Beasley E.M."/>
            <person name="Beeson K.Y."/>
            <person name="Benos P.V."/>
            <person name="Berman B.P."/>
            <person name="Bhandari D."/>
            <person name="Bolshakov S."/>
            <person name="Borkova D."/>
            <person name="Botchan M.R."/>
            <person name="Bouck J."/>
            <person name="Brokstein P."/>
            <person name="Brottier P."/>
            <person name="Burtis K.C."/>
            <person name="Busam D.A."/>
            <person name="Butler H."/>
            <person name="Cadieu E."/>
            <person name="Center A."/>
            <person name="Chandra I."/>
            <person name="Cherry J.M."/>
            <person name="Cawley S."/>
            <person name="Dahlke C."/>
            <person name="Davenport L.B."/>
            <person name="Davies P."/>
            <person name="de Pablos B."/>
            <person name="Delcher A."/>
            <person name="Deng Z."/>
            <person name="Mays A.D."/>
            <person name="Dew I."/>
            <person name="Dietz S.M."/>
            <person name="Dodson K."/>
            <person name="Doup L.E."/>
            <person name="Downes M."/>
            <person name="Dugan-Rocha S."/>
            <person name="Dunkov B.C."/>
            <person name="Dunn P."/>
            <person name="Durbin K.J."/>
            <person name="Evangelista C.C."/>
            <person name="Ferraz C."/>
            <person name="Ferriera S."/>
            <person name="Fleischmann W."/>
            <person name="Fosler C."/>
            <person name="Gabrielian A.E."/>
            <person name="Garg N.S."/>
            <person name="Gelbart W.M."/>
            <person name="Glasser K."/>
            <person name="Glodek A."/>
            <person name="Gong F."/>
            <person name="Gorrell J.H."/>
            <person name="Gu Z."/>
            <person name="Guan P."/>
            <person name="Harris M."/>
            <person name="Harris N.L."/>
            <person name="Harvey D.A."/>
            <person name="Heiman T.J."/>
            <person name="Hernandez J.R."/>
            <person name="Houck J."/>
            <person name="Hostin D."/>
            <person name="Houston K.A."/>
            <person name="Howland T.J."/>
            <person name="Wei M.-H."/>
            <person name="Ibegwam C."/>
            <person name="Jalali M."/>
            <person name="Kalush F."/>
            <person name="Karpen G.H."/>
            <person name="Ke Z."/>
            <person name="Kennison J.A."/>
            <person name="Ketchum K.A."/>
            <person name="Kimmel B.E."/>
            <person name="Kodira C.D."/>
            <person name="Kraft C.L."/>
            <person name="Kravitz S."/>
            <person name="Kulp D."/>
            <person name="Lai Z."/>
            <person name="Lasko P."/>
            <person name="Lei Y."/>
            <person name="Levitsky A.A."/>
            <person name="Li J.H."/>
            <person name="Li Z."/>
            <person name="Liang Y."/>
            <person name="Lin X."/>
            <person name="Liu X."/>
            <person name="Mattei B."/>
            <person name="McIntosh T.C."/>
            <person name="McLeod M.P."/>
            <person name="McPherson D."/>
            <person name="Merkulov G."/>
            <person name="Milshina N.V."/>
            <person name="Mobarry C."/>
            <person name="Morris J."/>
            <person name="Moshrefi A."/>
            <person name="Mount S.M."/>
            <person name="Moy M."/>
            <person name="Murphy B."/>
            <person name="Murphy L."/>
            <person name="Muzny D.M."/>
            <person name="Nelson D.L."/>
            <person name="Nelson D.R."/>
            <person name="Nelson K.A."/>
            <person name="Nixon K."/>
            <person name="Nusskern D.R."/>
            <person name="Pacleb J.M."/>
            <person name="Palazzolo M."/>
            <person name="Pittman G.S."/>
            <person name="Pan S."/>
            <person name="Pollard J."/>
            <person name="Puri V."/>
            <person name="Reese M.G."/>
            <person name="Reinert K."/>
            <person name="Remington K."/>
            <person name="Saunders R.D.C."/>
            <person name="Scheeler F."/>
            <person name="Shen H."/>
            <person name="Shue B.C."/>
            <person name="Siden-Kiamos I."/>
            <person name="Simpson M."/>
            <person name="Skupski M.P."/>
            <person name="Smith T.J."/>
            <person name="Spier E."/>
            <person name="Spradling A.C."/>
            <person name="Stapleton M."/>
            <person name="Strong R."/>
            <person name="Sun E."/>
            <person name="Svirskas R."/>
            <person name="Tector C."/>
            <person name="Turner R."/>
            <person name="Venter E."/>
            <person name="Wang A.H."/>
            <person name="Wang X."/>
            <person name="Wang Z.-Y."/>
            <person name="Wassarman D.A."/>
            <person name="Weinstock G.M."/>
            <person name="Weissenbach J."/>
            <person name="Williams S.M."/>
            <person name="Woodage T."/>
            <person name="Worley K.C."/>
            <person name="Wu D."/>
            <person name="Yang S."/>
            <person name="Yao Q.A."/>
            <person name="Ye J."/>
            <person name="Yeh R.-F."/>
            <person name="Zaveri J.S."/>
            <person name="Zhan M."/>
            <person name="Zhang G."/>
            <person name="Zhao Q."/>
            <person name="Zheng L."/>
            <person name="Zheng X.H."/>
            <person name="Zhong F.N."/>
            <person name="Zhong W."/>
            <person name="Zhou X."/>
            <person name="Zhu S.C."/>
            <person name="Zhu X."/>
            <person name="Smith H.O."/>
            <person name="Gibbs R.A."/>
            <person name="Myers E.W."/>
            <person name="Rubin G.M."/>
            <person name="Venter J.C."/>
        </authorList>
    </citation>
    <scope>NUCLEOTIDE SEQUENCE [LARGE SCALE GENOMIC DNA]</scope>
    <source>
        <strain>Berkeley</strain>
    </source>
</reference>
<reference key="5">
    <citation type="journal article" date="2002" name="Genome Biol.">
        <title>Annotation of the Drosophila melanogaster euchromatic genome: a systematic review.</title>
        <authorList>
            <person name="Misra S."/>
            <person name="Crosby M.A."/>
            <person name="Mungall C.J."/>
            <person name="Matthews B.B."/>
            <person name="Campbell K.S."/>
            <person name="Hradecky P."/>
            <person name="Huang Y."/>
            <person name="Kaminker J.S."/>
            <person name="Millburn G.H."/>
            <person name="Prochnik S.E."/>
            <person name="Smith C.D."/>
            <person name="Tupy J.L."/>
            <person name="Whitfield E.J."/>
            <person name="Bayraktaroglu L."/>
            <person name="Berman B.P."/>
            <person name="Bettencourt B.R."/>
            <person name="Celniker S.E."/>
            <person name="de Grey A.D.N.J."/>
            <person name="Drysdale R.A."/>
            <person name="Harris N.L."/>
            <person name="Richter J."/>
            <person name="Russo S."/>
            <person name="Schroeder A.J."/>
            <person name="Shu S.Q."/>
            <person name="Stapleton M."/>
            <person name="Yamada C."/>
            <person name="Ashburner M."/>
            <person name="Gelbart W.M."/>
            <person name="Rubin G.M."/>
            <person name="Lewis S.E."/>
        </authorList>
    </citation>
    <scope>GENOME REANNOTATION</scope>
    <source>
        <strain>Berkeley</strain>
    </source>
</reference>
<reference key="6">
    <citation type="journal article" date="2000" name="Science">
        <title>From sequence to chromosome: the tip of the X chromosome of D. melanogaster.</title>
        <authorList>
            <person name="Benos P.V."/>
            <person name="Gatt M.K."/>
            <person name="Ashburner M."/>
            <person name="Murphy L."/>
            <person name="Harris D."/>
            <person name="Barrell B.G."/>
            <person name="Ferraz C."/>
            <person name="Vidal S."/>
            <person name="Brun C."/>
            <person name="Demailles J."/>
            <person name="Cadieu E."/>
            <person name="Dreano S."/>
            <person name="Gloux S."/>
            <person name="Lelaure V."/>
            <person name="Mottier S."/>
            <person name="Galibert F."/>
            <person name="Borkova D."/>
            <person name="Minana B."/>
            <person name="Kafatos F.C."/>
            <person name="Louis C."/>
            <person name="Siden-Kiamos I."/>
            <person name="Bolshakov S."/>
            <person name="Papagiannakis G."/>
            <person name="Spanos L."/>
            <person name="Cox S."/>
            <person name="Madueno E."/>
            <person name="de Pablos B."/>
            <person name="Modolell J."/>
            <person name="Peter A."/>
            <person name="Schoettler P."/>
            <person name="Werner M."/>
            <person name="Mourkioti F."/>
            <person name="Beinert N."/>
            <person name="Dowe G."/>
            <person name="Schaefer U."/>
            <person name="Jaeckle H."/>
            <person name="Bucheton A."/>
            <person name="Callister D.M."/>
            <person name="Campbell L.A."/>
            <person name="Darlamitsou A."/>
            <person name="Henderson N.S."/>
            <person name="McMillan P.J."/>
            <person name="Salles C."/>
            <person name="Tait E.A."/>
            <person name="Valenti P."/>
            <person name="Saunders R.D.C."/>
            <person name="Glover D.M."/>
        </authorList>
    </citation>
    <scope>NUCLEOTIDE SEQUENCE [LARGE SCALE GENOMIC DNA]</scope>
    <source>
        <strain>Oregon-R</strain>
    </source>
</reference>
<reference key="7">
    <citation type="journal article" date="1993" name="Mol. Biol. Evol.">
        <title>Population genetics and phylogenetics of DNA sequence variation at multiple loci within the Drosophila melanogaster species complex.</title>
        <authorList>
            <person name="Hey J."/>
            <person name="Kliman R.M."/>
        </authorList>
    </citation>
    <scope>NUCLEOTIDE SEQUENCE [GENOMIC DNA] OF 57-324</scope>
    <source>
        <strain>ME-K1</strain>
        <strain>ME-K2</strain>
        <strain>ME-LI1</strain>
        <strain>ME-LI2</strain>
        <strain>ME-NJ1</strain>
        <strain>ME-NJ2</strain>
    </source>
</reference>
<reference key="8">
    <citation type="journal article" date="1993" name="EMBO J.">
        <title>Multimerization of the Drosophila zeste protein is required for efficient DNA binding.</title>
        <authorList>
            <person name="Chen J.D."/>
            <person name="Pirrotta V."/>
        </authorList>
    </citation>
    <scope>SELF-ASSOCIATION</scope>
</reference>
<gene>
    <name type="primary">z</name>
    <name type="ORF">CG7803</name>
</gene>
<protein>
    <recommendedName>
        <fullName>Regulatory protein zeste</fullName>
    </recommendedName>
</protein>
<name>ZEST_DROME</name>
<feature type="initiator methionine" description="Removed">
    <location>
        <position position="1"/>
    </location>
</feature>
<feature type="chain" id="PRO_0000066573" description="Regulatory protein zeste">
    <location>
        <begin position="2"/>
        <end position="575"/>
    </location>
</feature>
<feature type="DNA-binding region">
    <location>
        <begin position="48"/>
        <end position="128"/>
    </location>
</feature>
<feature type="region of interest" description="Disordered" evidence="1">
    <location>
        <begin position="1"/>
        <end position="53"/>
    </location>
</feature>
<feature type="region of interest" description="Hydrophobic">
    <location>
        <begin position="2"/>
        <end position="47"/>
    </location>
</feature>
<feature type="region of interest" description="Disordered" evidence="1">
    <location>
        <begin position="151"/>
        <end position="174"/>
    </location>
</feature>
<feature type="compositionally biased region" description="Gly residues" evidence="1">
    <location>
        <begin position="1"/>
        <end position="26"/>
    </location>
</feature>
<feature type="compositionally biased region" description="Polar residues" evidence="1">
    <location>
        <begin position="31"/>
        <end position="51"/>
    </location>
</feature>
<feature type="compositionally biased region" description="Low complexity" evidence="1">
    <location>
        <begin position="151"/>
        <end position="164"/>
    </location>
</feature>
<feature type="sequence variant" description="In strain: ME-K2.">
    <location>
        <begin position="233"/>
        <end position="234"/>
    </location>
</feature>
<feature type="sequence conflict" description="In Ref. 4 and 6." evidence="2" ref="4 6">
    <original>S</original>
    <variation>A</variation>
    <location>
        <position position="497"/>
    </location>
</feature>
<feature type="helix" evidence="3">
    <location>
        <begin position="58"/>
        <end position="70"/>
    </location>
</feature>
<feature type="helix" evidence="3">
    <location>
        <begin position="72"/>
        <end position="75"/>
    </location>
</feature>
<feature type="helix" evidence="3">
    <location>
        <begin position="77"/>
        <end position="80"/>
    </location>
</feature>
<feature type="helix" evidence="3">
    <location>
        <begin position="89"/>
        <end position="102"/>
    </location>
</feature>
<feature type="helix" evidence="3">
    <location>
        <begin position="112"/>
        <end position="124"/>
    </location>
</feature>